<proteinExistence type="inferred from homology"/>
<comment type="function">
    <text evidence="1">Through its interaction with host SGS3, acts as a suppressor of RNA-mediated gene silencing, also known as post-transcriptional gene silencing (PTGS), a mechanism of plant viral defense that limits the accumulation of viral RNAs.</text>
</comment>
<comment type="subunit">
    <text evidence="1">Interacts with host SGS3.</text>
</comment>
<comment type="subcellular location">
    <subcellularLocation>
        <location evidence="1">Host cytoplasm</location>
        <location evidence="1">Host perinuclear region</location>
    </subcellularLocation>
    <text evidence="1">Accumulates in inclusion bodies in the cell periphery. May interact with the ER network from the perinuclear region out to the cell periphery (By similarity).</text>
</comment>
<comment type="similarity">
    <text evidence="2">Belongs to the geminiviridae protein AV2/V2 family.</text>
</comment>
<organism>
    <name type="scientific">Tomato yellow leaf curl China virus</name>
    <name type="common">TYLCCNV</name>
    <dbReference type="NCBI Taxonomy" id="185793"/>
    <lineage>
        <taxon>Viruses</taxon>
        <taxon>Monodnaviria</taxon>
        <taxon>Shotokuvirae</taxon>
        <taxon>Cressdnaviricota</taxon>
        <taxon>Repensiviricetes</taxon>
        <taxon>Geplafuvirales</taxon>
        <taxon>Geminiviridae</taxon>
        <taxon>Begomovirus</taxon>
    </lineage>
</organism>
<protein>
    <recommendedName>
        <fullName>Protein V2</fullName>
    </recommendedName>
</protein>
<sequence>MWDPLLNEFPETVHGFRCMLAIKYLQLVENTYSPDTLGYDLIRDLISVIRARDYGETSRRYCHFHSRLEGASPAELRQPLYGSCCCPHCPRHQKTNVVKQAHVPEAHDVPDVQKP</sequence>
<gene>
    <name type="ORF">V2</name>
</gene>
<dbReference type="EMBL" id="AF311734">
    <property type="protein sequence ID" value="AAG27471.1"/>
    <property type="molecule type" value="Genomic_DNA"/>
</dbReference>
<dbReference type="KEGG" id="vg:949225"/>
<dbReference type="OrthoDB" id="14447at10239"/>
<dbReference type="Proteomes" id="UP000008267">
    <property type="component" value="Genome"/>
</dbReference>
<dbReference type="GO" id="GO:0044220">
    <property type="term" value="C:host cell perinuclear region of cytoplasm"/>
    <property type="evidence" value="ECO:0007669"/>
    <property type="project" value="UniProtKB-SubCell"/>
</dbReference>
<dbReference type="GO" id="GO:0060967">
    <property type="term" value="P:negative regulation of gene silencing by regulatory ncRNA"/>
    <property type="evidence" value="ECO:0007669"/>
    <property type="project" value="InterPro"/>
</dbReference>
<dbReference type="GO" id="GO:0052170">
    <property type="term" value="P:symbiont-mediated suppression of host innate immune response"/>
    <property type="evidence" value="ECO:0007669"/>
    <property type="project" value="UniProtKB-KW"/>
</dbReference>
<dbReference type="InterPro" id="IPR002511">
    <property type="entry name" value="Gemini_V2"/>
</dbReference>
<dbReference type="InterPro" id="IPR005159">
    <property type="entry name" value="WCCH"/>
</dbReference>
<dbReference type="Pfam" id="PF01524">
    <property type="entry name" value="Gemini_V2"/>
    <property type="match status" value="1"/>
</dbReference>
<dbReference type="Pfam" id="PF03716">
    <property type="entry name" value="WCCH"/>
    <property type="match status" value="1"/>
</dbReference>
<name>AV2_TYLCC</name>
<feature type="chain" id="PRO_0000312155" description="Protein V2">
    <location>
        <begin position="1"/>
        <end position="115"/>
    </location>
</feature>
<organismHost>
    <name type="scientific">Nicotiana tabacum</name>
    <name type="common">Common tobacco</name>
    <dbReference type="NCBI Taxonomy" id="4097"/>
</organismHost>
<organismHost>
    <name type="scientific">Sigesbeckia orientalis</name>
    <dbReference type="NCBI Taxonomy" id="185191"/>
</organismHost>
<organismHost>
    <name type="scientific">Solanum lycopersicum</name>
    <name type="common">Tomato</name>
    <name type="synonym">Lycopersicon esculentum</name>
    <dbReference type="NCBI Taxonomy" id="4081"/>
</organismHost>
<accession>Q9DXE9</accession>
<keyword id="KW-1035">Host cytoplasm</keyword>
<keyword id="KW-0945">Host-virus interaction</keyword>
<keyword id="KW-1090">Inhibition of host innate immune response by virus</keyword>
<keyword id="KW-1185">Reference proteome</keyword>
<keyword id="KW-0941">Suppressor of RNA silencing</keyword>
<keyword id="KW-0899">Viral immunoevasion</keyword>
<evidence type="ECO:0000250" key="1"/>
<evidence type="ECO:0000305" key="2"/>
<reference key="1">
    <citation type="journal article" date="2001" name="Virus Res.">
        <title>Tomato yellow leaf curl China virus: monopartite genome organization and agroinfection of plants.</title>
        <authorList>
            <person name="Yin Q."/>
            <person name="Yang H."/>
            <person name="Gong Q."/>
            <person name="Wang H."/>
            <person name="Liu Y."/>
            <person name="Hong Y."/>
            <person name="Tien P."/>
        </authorList>
    </citation>
    <scope>NUCLEOTIDE SEQUENCE [GENOMIC DNA]</scope>
    <source>
        <strain>Isolate CHI</strain>
    </source>
</reference>